<reference key="1">
    <citation type="journal article" date="1993" name="Mol. Microbiol.">
        <title>Multisensory activation of the phosphorelay initiating sporulation in Bacillus subtilis: identification and sequence of the protein kinase of the alternate pathway.</title>
        <authorList>
            <person name="Trach K.A."/>
            <person name="Hoch J.A."/>
        </authorList>
    </citation>
    <scope>NUCLEOTIDE SEQUENCE [GENOMIC DNA]</scope>
    <source>
        <strain>168</strain>
    </source>
</reference>
<reference key="2">
    <citation type="journal article" date="1997" name="Microbiology">
        <title>Analysis of the Bacillus subtilis genome: cloning and nucleotide sequence of a 62 kb region between 275 degrees (rrnB) and 284 degrees (pai).</title>
        <authorList>
            <person name="Oudega B."/>
            <person name="Koningstein G."/>
            <person name="Rodrigues L."/>
            <person name="de Sales Ramon M."/>
            <person name="Hilbert H."/>
            <person name="Duesterhoeft A."/>
            <person name="Pohl T.M."/>
            <person name="Weitzenegger T."/>
        </authorList>
    </citation>
    <scope>NUCLEOTIDE SEQUENCE [GENOMIC DNA]</scope>
    <source>
        <strain>168</strain>
    </source>
</reference>
<reference key="3">
    <citation type="journal article" date="1997" name="Nature">
        <title>The complete genome sequence of the Gram-positive bacterium Bacillus subtilis.</title>
        <authorList>
            <person name="Kunst F."/>
            <person name="Ogasawara N."/>
            <person name="Moszer I."/>
            <person name="Albertini A.M."/>
            <person name="Alloni G."/>
            <person name="Azevedo V."/>
            <person name="Bertero M.G."/>
            <person name="Bessieres P."/>
            <person name="Bolotin A."/>
            <person name="Borchert S."/>
            <person name="Borriss R."/>
            <person name="Boursier L."/>
            <person name="Brans A."/>
            <person name="Braun M."/>
            <person name="Brignell S.C."/>
            <person name="Bron S."/>
            <person name="Brouillet S."/>
            <person name="Bruschi C.V."/>
            <person name="Caldwell B."/>
            <person name="Capuano V."/>
            <person name="Carter N.M."/>
            <person name="Choi S.-K."/>
            <person name="Codani J.-J."/>
            <person name="Connerton I.F."/>
            <person name="Cummings N.J."/>
            <person name="Daniel R.A."/>
            <person name="Denizot F."/>
            <person name="Devine K.M."/>
            <person name="Duesterhoeft A."/>
            <person name="Ehrlich S.D."/>
            <person name="Emmerson P.T."/>
            <person name="Entian K.-D."/>
            <person name="Errington J."/>
            <person name="Fabret C."/>
            <person name="Ferrari E."/>
            <person name="Foulger D."/>
            <person name="Fritz C."/>
            <person name="Fujita M."/>
            <person name="Fujita Y."/>
            <person name="Fuma S."/>
            <person name="Galizzi A."/>
            <person name="Galleron N."/>
            <person name="Ghim S.-Y."/>
            <person name="Glaser P."/>
            <person name="Goffeau A."/>
            <person name="Golightly E.J."/>
            <person name="Grandi G."/>
            <person name="Guiseppi G."/>
            <person name="Guy B.J."/>
            <person name="Haga K."/>
            <person name="Haiech J."/>
            <person name="Harwood C.R."/>
            <person name="Henaut A."/>
            <person name="Hilbert H."/>
            <person name="Holsappel S."/>
            <person name="Hosono S."/>
            <person name="Hullo M.-F."/>
            <person name="Itaya M."/>
            <person name="Jones L.-M."/>
            <person name="Joris B."/>
            <person name="Karamata D."/>
            <person name="Kasahara Y."/>
            <person name="Klaerr-Blanchard M."/>
            <person name="Klein C."/>
            <person name="Kobayashi Y."/>
            <person name="Koetter P."/>
            <person name="Koningstein G."/>
            <person name="Krogh S."/>
            <person name="Kumano M."/>
            <person name="Kurita K."/>
            <person name="Lapidus A."/>
            <person name="Lardinois S."/>
            <person name="Lauber J."/>
            <person name="Lazarevic V."/>
            <person name="Lee S.-M."/>
            <person name="Levine A."/>
            <person name="Liu H."/>
            <person name="Masuda S."/>
            <person name="Mauel C."/>
            <person name="Medigue C."/>
            <person name="Medina N."/>
            <person name="Mellado R.P."/>
            <person name="Mizuno M."/>
            <person name="Moestl D."/>
            <person name="Nakai S."/>
            <person name="Noback M."/>
            <person name="Noone D."/>
            <person name="O'Reilly M."/>
            <person name="Ogawa K."/>
            <person name="Ogiwara A."/>
            <person name="Oudega B."/>
            <person name="Park S.-H."/>
            <person name="Parro V."/>
            <person name="Pohl T.M."/>
            <person name="Portetelle D."/>
            <person name="Porwollik S."/>
            <person name="Prescott A.M."/>
            <person name="Presecan E."/>
            <person name="Pujic P."/>
            <person name="Purnelle B."/>
            <person name="Rapoport G."/>
            <person name="Rey M."/>
            <person name="Reynolds S."/>
            <person name="Rieger M."/>
            <person name="Rivolta C."/>
            <person name="Rocha E."/>
            <person name="Roche B."/>
            <person name="Rose M."/>
            <person name="Sadaie Y."/>
            <person name="Sato T."/>
            <person name="Scanlan E."/>
            <person name="Schleich S."/>
            <person name="Schroeter R."/>
            <person name="Scoffone F."/>
            <person name="Sekiguchi J."/>
            <person name="Sekowska A."/>
            <person name="Seror S.J."/>
            <person name="Serror P."/>
            <person name="Shin B.-S."/>
            <person name="Soldo B."/>
            <person name="Sorokin A."/>
            <person name="Tacconi E."/>
            <person name="Takagi T."/>
            <person name="Takahashi H."/>
            <person name="Takemaru K."/>
            <person name="Takeuchi M."/>
            <person name="Tamakoshi A."/>
            <person name="Tanaka T."/>
            <person name="Terpstra P."/>
            <person name="Tognoni A."/>
            <person name="Tosato V."/>
            <person name="Uchiyama S."/>
            <person name="Vandenbol M."/>
            <person name="Vannier F."/>
            <person name="Vassarotti A."/>
            <person name="Viari A."/>
            <person name="Wambutt R."/>
            <person name="Wedler E."/>
            <person name="Wedler H."/>
            <person name="Weitzenegger T."/>
            <person name="Winters P."/>
            <person name="Wipat A."/>
            <person name="Yamamoto H."/>
            <person name="Yamane K."/>
            <person name="Yasumoto K."/>
            <person name="Yata K."/>
            <person name="Yoshida K."/>
            <person name="Yoshikawa H.-F."/>
            <person name="Zumstein E."/>
            <person name="Yoshikawa H."/>
            <person name="Danchin A."/>
        </authorList>
    </citation>
    <scope>NUCLEOTIDE SEQUENCE [LARGE SCALE GENOMIC DNA]</scope>
    <source>
        <strain>168</strain>
    </source>
</reference>
<reference key="4">
    <citation type="journal article" date="2005" name="Biochimie">
        <title>The PatB protein of Bacillus subtilis is a C-S-lyase.</title>
        <authorList>
            <person name="Auger S."/>
            <person name="Gomez M.P."/>
            <person name="Danchin A."/>
            <person name="Martin-Verstraete I."/>
        </authorList>
    </citation>
    <scope>CATALYTIC ACTIVITY</scope>
    <scope>BIOPHYSICOCHEMICAL PROPERTIES</scope>
    <scope>INDUCTION</scope>
    <scope>DISRUPTION PHENOTYPE</scope>
    <source>
        <strain>168</strain>
    </source>
</reference>
<proteinExistence type="evidence at protein level"/>
<name>CBL_BACSU</name>
<gene>
    <name type="primary">patB</name>
    <name type="ordered locus">BSU31440</name>
</gene>
<comment type="function">
    <text>Catalyzes the transformation of cystathionine to homocysteine. Also exhibits cysteine desulfhydrase activity in vitro, producing sulfide from cysteine.</text>
</comment>
<comment type="catalytic activity">
    <reaction evidence="2">
        <text>L,L-cystathionine + H2O = L-homocysteine + pyruvate + NH4(+)</text>
        <dbReference type="Rhea" id="RHEA:13965"/>
        <dbReference type="ChEBI" id="CHEBI:15361"/>
        <dbReference type="ChEBI" id="CHEBI:15377"/>
        <dbReference type="ChEBI" id="CHEBI:28938"/>
        <dbReference type="ChEBI" id="CHEBI:58161"/>
        <dbReference type="ChEBI" id="CHEBI:58199"/>
    </reaction>
</comment>
<comment type="catalytic activity">
    <reaction>
        <text>an S-substituted L-cysteine + H2O = a thiol + pyruvate + NH4(+)</text>
        <dbReference type="Rhea" id="RHEA:18121"/>
        <dbReference type="ChEBI" id="CHEBI:15361"/>
        <dbReference type="ChEBI" id="CHEBI:15377"/>
        <dbReference type="ChEBI" id="CHEBI:28938"/>
        <dbReference type="ChEBI" id="CHEBI:29256"/>
        <dbReference type="ChEBI" id="CHEBI:58717"/>
        <dbReference type="EC" id="4.4.1.13"/>
    </reaction>
</comment>
<comment type="cofactor">
    <cofactor evidence="1">
        <name>pyridoxal 5'-phosphate</name>
        <dbReference type="ChEBI" id="CHEBI:597326"/>
    </cofactor>
</comment>
<comment type="biophysicochemical properties">
    <kinetics>
        <KM evidence="2">1.62 mM for cystathionine</KM>
    </kinetics>
</comment>
<comment type="pathway">
    <text>Amino-acid biosynthesis; L-methionine biosynthesis via de novo pathway; L-homocysteine from L-cystathionine: step 1/1.</text>
</comment>
<comment type="induction">
    <text evidence="2">Constitutively expressed at a low level.</text>
</comment>
<comment type="disruption phenotype">
    <text evidence="2">No visible phenotype.</text>
</comment>
<comment type="similarity">
    <text evidence="3">Belongs to the class-II pyridoxal-phosphate-dependent aminotransferase family. MalY/PatB cystathionine beta-lyase subfamily.</text>
</comment>
<feature type="chain" id="PRO_0000163848" description="Cystathionine beta-lyase PatB">
    <location>
        <begin position="1"/>
        <end position="387"/>
    </location>
</feature>
<feature type="modified residue" description="N6-(pyridoxal phosphate)lysine" evidence="1">
    <location>
        <position position="234"/>
    </location>
</feature>
<feature type="strand" evidence="4">
    <location>
        <begin position="3"/>
        <end position="5"/>
    </location>
</feature>
<feature type="turn" evidence="4">
    <location>
        <begin position="10"/>
        <end position="13"/>
    </location>
</feature>
<feature type="helix" evidence="4">
    <location>
        <begin position="15"/>
        <end position="18"/>
    </location>
</feature>
<feature type="helix" evidence="4">
    <location>
        <begin position="20"/>
        <end position="24"/>
    </location>
</feature>
<feature type="strand" evidence="4">
    <location>
        <begin position="27"/>
        <end position="31"/>
    </location>
</feature>
<feature type="helix" evidence="4">
    <location>
        <begin position="43"/>
        <end position="55"/>
    </location>
</feature>
<feature type="helix" evidence="4">
    <location>
        <begin position="65"/>
        <end position="79"/>
    </location>
</feature>
<feature type="helix" evidence="4">
    <location>
        <begin position="85"/>
        <end position="87"/>
    </location>
</feature>
<feature type="strand" evidence="4">
    <location>
        <begin position="88"/>
        <end position="92"/>
    </location>
</feature>
<feature type="helix" evidence="4">
    <location>
        <begin position="94"/>
        <end position="105"/>
    </location>
</feature>
<feature type="strand" evidence="4">
    <location>
        <begin position="111"/>
        <end position="114"/>
    </location>
</feature>
<feature type="helix" evidence="4">
    <location>
        <begin position="121"/>
        <end position="127"/>
    </location>
</feature>
<feature type="turn" evidence="4">
    <location>
        <begin position="128"/>
        <end position="130"/>
    </location>
</feature>
<feature type="strand" evidence="4">
    <location>
        <begin position="132"/>
        <end position="135"/>
    </location>
</feature>
<feature type="strand" evidence="4">
    <location>
        <begin position="142"/>
        <end position="146"/>
    </location>
</feature>
<feature type="helix" evidence="4">
    <location>
        <begin position="149"/>
        <end position="156"/>
    </location>
</feature>
<feature type="strand" evidence="4">
    <location>
        <begin position="161"/>
        <end position="169"/>
    </location>
</feature>
<feature type="turn" evidence="4">
    <location>
        <begin position="171"/>
        <end position="173"/>
    </location>
</feature>
<feature type="helix" evidence="4">
    <location>
        <begin position="179"/>
        <end position="192"/>
    </location>
</feature>
<feature type="strand" evidence="4">
    <location>
        <begin position="195"/>
        <end position="199"/>
    </location>
</feature>
<feature type="turn" evidence="4">
    <location>
        <begin position="201"/>
        <end position="204"/>
    </location>
</feature>
<feature type="helix" evidence="4">
    <location>
        <begin position="215"/>
        <end position="217"/>
    </location>
</feature>
<feature type="helix" evidence="4">
    <location>
        <begin position="220"/>
        <end position="224"/>
    </location>
</feature>
<feature type="strand" evidence="4">
    <location>
        <begin position="226"/>
        <end position="230"/>
    </location>
</feature>
<feature type="helix" evidence="4">
    <location>
        <begin position="233"/>
        <end position="236"/>
    </location>
</feature>
<feature type="helix" evidence="4">
    <location>
        <begin position="239"/>
        <end position="241"/>
    </location>
</feature>
<feature type="strand" evidence="4">
    <location>
        <begin position="244"/>
        <end position="247"/>
    </location>
</feature>
<feature type="helix" evidence="4">
    <location>
        <begin position="251"/>
        <end position="263"/>
    </location>
</feature>
<feature type="helix" evidence="4">
    <location>
        <begin position="271"/>
        <end position="283"/>
    </location>
</feature>
<feature type="helix" evidence="4">
    <location>
        <begin position="285"/>
        <end position="309"/>
    </location>
</feature>
<feature type="strand" evidence="4">
    <location>
        <begin position="313"/>
        <end position="315"/>
    </location>
</feature>
<feature type="strand" evidence="4">
    <location>
        <begin position="319"/>
        <end position="327"/>
    </location>
</feature>
<feature type="helix" evidence="4">
    <location>
        <begin position="329"/>
        <end position="331"/>
    </location>
</feature>
<feature type="helix" evidence="4">
    <location>
        <begin position="335"/>
        <end position="344"/>
    </location>
</feature>
<feature type="helix" evidence="4">
    <location>
        <begin position="353"/>
        <end position="356"/>
    </location>
</feature>
<feature type="strand" evidence="4">
    <location>
        <begin position="363"/>
        <end position="367"/>
    </location>
</feature>
<feature type="helix" evidence="4">
    <location>
        <begin position="372"/>
        <end position="385"/>
    </location>
</feature>
<accession>Q08432</accession>
<protein>
    <recommendedName>
        <fullName>Cystathionine beta-lyase PatB</fullName>
        <shortName>CBL</shortName>
        <ecNumber>4.4.1.13</ecNumber>
    </recommendedName>
    <alternativeName>
        <fullName>Beta-cystathionase PatB</fullName>
    </alternativeName>
    <alternativeName>
        <fullName>Cysteine lyase PatB</fullName>
    </alternativeName>
    <alternativeName>
        <fullName evidence="3">Cysteine-S-conjugate beta-lyase PatB</fullName>
    </alternativeName>
</protein>
<evidence type="ECO:0000250" key="1"/>
<evidence type="ECO:0000269" key="2">
    <source>
    </source>
</evidence>
<evidence type="ECO:0000305" key="3"/>
<evidence type="ECO:0007829" key="4">
    <source>
        <dbReference type="PDB" id="6QP3"/>
    </source>
</evidence>
<dbReference type="EC" id="4.4.1.13"/>
<dbReference type="EMBL" id="U63302">
    <property type="protein sequence ID" value="AAB61979.1"/>
    <property type="molecule type" value="Genomic_DNA"/>
</dbReference>
<dbReference type="EMBL" id="Z93933">
    <property type="protein sequence ID" value="CAB07910.1"/>
    <property type="molecule type" value="Genomic_DNA"/>
</dbReference>
<dbReference type="EMBL" id="Z93934">
    <property type="protein sequence ID" value="CAB07924.1"/>
    <property type="molecule type" value="Genomic_DNA"/>
</dbReference>
<dbReference type="EMBL" id="AL009126">
    <property type="protein sequence ID" value="CAB15133.1"/>
    <property type="molecule type" value="Genomic_DNA"/>
</dbReference>
<dbReference type="PIR" id="S32934">
    <property type="entry name" value="S32934"/>
</dbReference>
<dbReference type="RefSeq" id="NP_391022.1">
    <property type="nucleotide sequence ID" value="NC_000964.3"/>
</dbReference>
<dbReference type="RefSeq" id="WP_003228854.1">
    <property type="nucleotide sequence ID" value="NZ_OZ025638.1"/>
</dbReference>
<dbReference type="PDB" id="6QP3">
    <property type="method" value="X-ray"/>
    <property type="resolution" value="2.30 A"/>
    <property type="chains" value="A/B/C/D=1-387"/>
</dbReference>
<dbReference type="PDBsum" id="6QP3"/>
<dbReference type="SMR" id="Q08432"/>
<dbReference type="FunCoup" id="Q08432">
    <property type="interactions" value="427"/>
</dbReference>
<dbReference type="STRING" id="224308.BSU31440"/>
<dbReference type="jPOST" id="Q08432"/>
<dbReference type="PaxDb" id="224308-BSU31440"/>
<dbReference type="EnsemblBacteria" id="CAB15133">
    <property type="protein sequence ID" value="CAB15133"/>
    <property type="gene ID" value="BSU_31440"/>
</dbReference>
<dbReference type="GeneID" id="937170"/>
<dbReference type="KEGG" id="bsu:BSU31440"/>
<dbReference type="PATRIC" id="fig|224308.179.peg.3408"/>
<dbReference type="eggNOG" id="COG1168">
    <property type="taxonomic scope" value="Bacteria"/>
</dbReference>
<dbReference type="InParanoid" id="Q08432"/>
<dbReference type="OrthoDB" id="9802872at2"/>
<dbReference type="PhylomeDB" id="Q08432"/>
<dbReference type="BioCyc" id="BSUB:BSU31440-MONOMER"/>
<dbReference type="SABIO-RK" id="Q08432"/>
<dbReference type="UniPathway" id="UPA00051">
    <property type="reaction ID" value="UER00078"/>
</dbReference>
<dbReference type="Proteomes" id="UP000001570">
    <property type="component" value="Chromosome"/>
</dbReference>
<dbReference type="GO" id="GO:0047804">
    <property type="term" value="F:cysteine-S-conjugate beta-lyase activity"/>
    <property type="evidence" value="ECO:0007669"/>
    <property type="project" value="UniProtKB-EC"/>
</dbReference>
<dbReference type="GO" id="GO:0030170">
    <property type="term" value="F:pyridoxal phosphate binding"/>
    <property type="evidence" value="ECO:0007669"/>
    <property type="project" value="InterPro"/>
</dbReference>
<dbReference type="GO" id="GO:0009086">
    <property type="term" value="P:methionine biosynthetic process"/>
    <property type="evidence" value="ECO:0007669"/>
    <property type="project" value="UniProtKB-KW"/>
</dbReference>
<dbReference type="CDD" id="cd00609">
    <property type="entry name" value="AAT_like"/>
    <property type="match status" value="1"/>
</dbReference>
<dbReference type="Gene3D" id="3.90.1150.10">
    <property type="entry name" value="Aspartate Aminotransferase, domain 1"/>
    <property type="match status" value="1"/>
</dbReference>
<dbReference type="Gene3D" id="3.40.640.10">
    <property type="entry name" value="Type I PLP-dependent aspartate aminotransferase-like (Major domain)"/>
    <property type="match status" value="1"/>
</dbReference>
<dbReference type="InterPro" id="IPR004839">
    <property type="entry name" value="Aminotransferase_I/II_large"/>
</dbReference>
<dbReference type="InterPro" id="IPR027619">
    <property type="entry name" value="C-S_lyase_PatB-like"/>
</dbReference>
<dbReference type="InterPro" id="IPR051798">
    <property type="entry name" value="Class-II_PLP-Dep_Aminotrans"/>
</dbReference>
<dbReference type="InterPro" id="IPR015424">
    <property type="entry name" value="PyrdxlP-dep_Trfase"/>
</dbReference>
<dbReference type="InterPro" id="IPR015421">
    <property type="entry name" value="PyrdxlP-dep_Trfase_major"/>
</dbReference>
<dbReference type="InterPro" id="IPR015422">
    <property type="entry name" value="PyrdxlP-dep_Trfase_small"/>
</dbReference>
<dbReference type="NCBIfam" id="TIGR04350">
    <property type="entry name" value="C_S_lyase_PatB"/>
    <property type="match status" value="1"/>
</dbReference>
<dbReference type="PANTHER" id="PTHR43525">
    <property type="entry name" value="PROTEIN MALY"/>
    <property type="match status" value="1"/>
</dbReference>
<dbReference type="PANTHER" id="PTHR43525:SF1">
    <property type="entry name" value="PROTEIN MALY"/>
    <property type="match status" value="1"/>
</dbReference>
<dbReference type="Pfam" id="PF00155">
    <property type="entry name" value="Aminotran_1_2"/>
    <property type="match status" value="1"/>
</dbReference>
<dbReference type="SUPFAM" id="SSF53383">
    <property type="entry name" value="PLP-dependent transferases"/>
    <property type="match status" value="1"/>
</dbReference>
<keyword id="KW-0002">3D-structure</keyword>
<keyword id="KW-0028">Amino-acid biosynthesis</keyword>
<keyword id="KW-0456">Lyase</keyword>
<keyword id="KW-0486">Methionine biosynthesis</keyword>
<keyword id="KW-0663">Pyridoxal phosphate</keyword>
<keyword id="KW-1185">Reference proteome</keyword>
<sequence>MNFDKREERLGTQSVKWDKTGELFGVTDALPMWVADMDFRAPEAITEALKERLDHGIFGYTTPDQKTKDAVCGWMQNRHGWKVNPESITFSPGVVTALSMAVQAFTEPGDQVVVQPPVYTPFYHMVEKNGRHILHNPLLEKDGAYAIDFEDLETKLSDPSVTLFILCNPHNPSGRSWSREDLLKLGELCLEHGVTVVSDEIHSDLMLYGHKHTPFASLSDDFADISVTCAAPSKTFNIAGLQASAIIIPDRLKRAKFSASLQRNGLGGLNAFAVTAIEAAYSKGGPWLDELITYIEKNMNEAEAFLSTELPKVKMMKPDASYLIWLDFSAYGLSDAELQQRMLKKGKVILEPGTKYGPGGEGFMRLNAGCSLATLQDGLRRIKAALS</sequence>
<organism>
    <name type="scientific">Bacillus subtilis (strain 168)</name>
    <dbReference type="NCBI Taxonomy" id="224308"/>
    <lineage>
        <taxon>Bacteria</taxon>
        <taxon>Bacillati</taxon>
        <taxon>Bacillota</taxon>
        <taxon>Bacilli</taxon>
        <taxon>Bacillales</taxon>
        <taxon>Bacillaceae</taxon>
        <taxon>Bacillus</taxon>
    </lineage>
</organism>